<dbReference type="EC" id="1.1.1.85" evidence="1"/>
<dbReference type="EMBL" id="AE017333">
    <property type="protein sequence ID" value="AAU41825.1"/>
    <property type="status" value="ALT_INIT"/>
    <property type="molecule type" value="Genomic_DNA"/>
</dbReference>
<dbReference type="EMBL" id="CP000002">
    <property type="protein sequence ID" value="AAU24463.1"/>
    <property type="molecule type" value="Genomic_DNA"/>
</dbReference>
<dbReference type="RefSeq" id="WP_003184091.1">
    <property type="nucleotide sequence ID" value="NC_006322.1"/>
</dbReference>
<dbReference type="SMR" id="Q65GI9"/>
<dbReference type="STRING" id="279010.BL00612"/>
<dbReference type="GeneID" id="92860449"/>
<dbReference type="KEGG" id="bld:BLi02957"/>
<dbReference type="KEGG" id="bli:BL00612"/>
<dbReference type="PATRIC" id="fig|279010.13.peg.3017"/>
<dbReference type="eggNOG" id="COG0473">
    <property type="taxonomic scope" value="Bacteria"/>
</dbReference>
<dbReference type="HOGENOM" id="CLU_031953_0_3_9"/>
<dbReference type="UniPathway" id="UPA00048">
    <property type="reaction ID" value="UER00072"/>
</dbReference>
<dbReference type="Proteomes" id="UP000000606">
    <property type="component" value="Chromosome"/>
</dbReference>
<dbReference type="GO" id="GO:0005829">
    <property type="term" value="C:cytosol"/>
    <property type="evidence" value="ECO:0007669"/>
    <property type="project" value="TreeGrafter"/>
</dbReference>
<dbReference type="GO" id="GO:0003862">
    <property type="term" value="F:3-isopropylmalate dehydrogenase activity"/>
    <property type="evidence" value="ECO:0007669"/>
    <property type="project" value="UniProtKB-UniRule"/>
</dbReference>
<dbReference type="GO" id="GO:0000287">
    <property type="term" value="F:magnesium ion binding"/>
    <property type="evidence" value="ECO:0007669"/>
    <property type="project" value="InterPro"/>
</dbReference>
<dbReference type="GO" id="GO:0051287">
    <property type="term" value="F:NAD binding"/>
    <property type="evidence" value="ECO:0007669"/>
    <property type="project" value="InterPro"/>
</dbReference>
<dbReference type="GO" id="GO:0009098">
    <property type="term" value="P:L-leucine biosynthetic process"/>
    <property type="evidence" value="ECO:0007669"/>
    <property type="project" value="UniProtKB-UniRule"/>
</dbReference>
<dbReference type="FunFam" id="3.40.718.10:FF:000028">
    <property type="entry name" value="3-isopropylmalate dehydrogenase"/>
    <property type="match status" value="1"/>
</dbReference>
<dbReference type="Gene3D" id="3.40.718.10">
    <property type="entry name" value="Isopropylmalate Dehydrogenase"/>
    <property type="match status" value="1"/>
</dbReference>
<dbReference type="HAMAP" id="MF_01033">
    <property type="entry name" value="LeuB_type1"/>
    <property type="match status" value="1"/>
</dbReference>
<dbReference type="InterPro" id="IPR019818">
    <property type="entry name" value="IsoCit/isopropylmalate_DH_CS"/>
</dbReference>
<dbReference type="InterPro" id="IPR024084">
    <property type="entry name" value="IsoPropMal-DH-like_dom"/>
</dbReference>
<dbReference type="InterPro" id="IPR004429">
    <property type="entry name" value="Isopropylmalate_DH"/>
</dbReference>
<dbReference type="NCBIfam" id="TIGR00169">
    <property type="entry name" value="leuB"/>
    <property type="match status" value="1"/>
</dbReference>
<dbReference type="PANTHER" id="PTHR42979">
    <property type="entry name" value="3-ISOPROPYLMALATE DEHYDROGENASE"/>
    <property type="match status" value="1"/>
</dbReference>
<dbReference type="PANTHER" id="PTHR42979:SF1">
    <property type="entry name" value="3-ISOPROPYLMALATE DEHYDROGENASE"/>
    <property type="match status" value="1"/>
</dbReference>
<dbReference type="Pfam" id="PF00180">
    <property type="entry name" value="Iso_dh"/>
    <property type="match status" value="1"/>
</dbReference>
<dbReference type="SMART" id="SM01329">
    <property type="entry name" value="Iso_dh"/>
    <property type="match status" value="1"/>
</dbReference>
<dbReference type="SUPFAM" id="SSF53659">
    <property type="entry name" value="Isocitrate/Isopropylmalate dehydrogenase-like"/>
    <property type="match status" value="1"/>
</dbReference>
<dbReference type="PROSITE" id="PS00470">
    <property type="entry name" value="IDH_IMDH"/>
    <property type="match status" value="1"/>
</dbReference>
<organism>
    <name type="scientific">Bacillus licheniformis (strain ATCC 14580 / DSM 13 / JCM 2505 / CCUG 7422 / NBRC 12200 / NCIMB 9375 / NCTC 10341 / NRRL NRS-1264 / Gibson 46)</name>
    <dbReference type="NCBI Taxonomy" id="279010"/>
    <lineage>
        <taxon>Bacteria</taxon>
        <taxon>Bacillati</taxon>
        <taxon>Bacillota</taxon>
        <taxon>Bacilli</taxon>
        <taxon>Bacillales</taxon>
        <taxon>Bacillaceae</taxon>
        <taxon>Bacillus</taxon>
    </lineage>
</organism>
<accession>Q65GI9</accession>
<accession>Q62RZ7</accession>
<feature type="chain" id="PRO_0000083640" description="3-isopropylmalate dehydrogenase">
    <location>
        <begin position="1"/>
        <end position="370"/>
    </location>
</feature>
<feature type="binding site" evidence="1">
    <location>
        <begin position="76"/>
        <end position="89"/>
    </location>
    <ligand>
        <name>NAD(+)</name>
        <dbReference type="ChEBI" id="CHEBI:57540"/>
    </ligand>
</feature>
<feature type="binding site" evidence="1">
    <location>
        <position position="96"/>
    </location>
    <ligand>
        <name>substrate</name>
    </ligand>
</feature>
<feature type="binding site" evidence="1">
    <location>
        <position position="106"/>
    </location>
    <ligand>
        <name>substrate</name>
    </ligand>
</feature>
<feature type="binding site" evidence="1">
    <location>
        <position position="134"/>
    </location>
    <ligand>
        <name>substrate</name>
    </ligand>
</feature>
<feature type="binding site" evidence="1">
    <location>
        <position position="224"/>
    </location>
    <ligand>
        <name>Mg(2+)</name>
        <dbReference type="ChEBI" id="CHEBI:18420"/>
    </ligand>
</feature>
<feature type="binding site" evidence="1">
    <location>
        <position position="224"/>
    </location>
    <ligand>
        <name>substrate</name>
    </ligand>
</feature>
<feature type="binding site" evidence="1">
    <location>
        <position position="248"/>
    </location>
    <ligand>
        <name>Mg(2+)</name>
        <dbReference type="ChEBI" id="CHEBI:18420"/>
    </ligand>
</feature>
<feature type="binding site" evidence="1">
    <location>
        <position position="252"/>
    </location>
    <ligand>
        <name>Mg(2+)</name>
        <dbReference type="ChEBI" id="CHEBI:18420"/>
    </ligand>
</feature>
<feature type="binding site" evidence="1">
    <location>
        <begin position="282"/>
        <end position="294"/>
    </location>
    <ligand>
        <name>NAD(+)</name>
        <dbReference type="ChEBI" id="CHEBI:57540"/>
    </ligand>
</feature>
<feature type="site" description="Important for catalysis" evidence="1">
    <location>
        <position position="141"/>
    </location>
</feature>
<feature type="site" description="Important for catalysis" evidence="1">
    <location>
        <position position="192"/>
    </location>
</feature>
<proteinExistence type="inferred from homology"/>
<name>LEU3_BACLD</name>
<reference key="1">
    <citation type="journal article" date="2004" name="J. Mol. Microbiol. Biotechnol.">
        <title>The complete genome sequence of Bacillus licheniformis DSM13, an organism with great industrial potential.</title>
        <authorList>
            <person name="Veith B."/>
            <person name="Herzberg C."/>
            <person name="Steckel S."/>
            <person name="Feesche J."/>
            <person name="Maurer K.H."/>
            <person name="Ehrenreich P."/>
            <person name="Baeumer S."/>
            <person name="Henne A."/>
            <person name="Liesegang H."/>
            <person name="Merkl R."/>
            <person name="Ehrenreich A."/>
            <person name="Gottschalk G."/>
        </authorList>
    </citation>
    <scope>NUCLEOTIDE SEQUENCE [LARGE SCALE GENOMIC DNA]</scope>
    <source>
        <strain>ATCC 14580 / DSM 13 / JCM 2505 / CCUG 7422 / NBRC 12200 / NCIMB 9375 / NCTC 10341 / NRRL NRS-1264 / Gibson 46</strain>
    </source>
</reference>
<reference key="2">
    <citation type="journal article" date="2004" name="Genome Biol.">
        <title>Complete genome sequence of the industrial bacterium Bacillus licheniformis and comparisons with closely related Bacillus species.</title>
        <authorList>
            <person name="Rey M.W."/>
            <person name="Ramaiya P."/>
            <person name="Nelson B.A."/>
            <person name="Brody-Karpin S.D."/>
            <person name="Zaretsky E.J."/>
            <person name="Tang M."/>
            <person name="Lopez de Leon A."/>
            <person name="Xiang H."/>
            <person name="Gusti V."/>
            <person name="Clausen I.G."/>
            <person name="Olsen P.B."/>
            <person name="Rasmussen M.D."/>
            <person name="Andersen J.T."/>
            <person name="Joergensen P.L."/>
            <person name="Larsen T.S."/>
            <person name="Sorokin A."/>
            <person name="Bolotin A."/>
            <person name="Lapidus A."/>
            <person name="Galleron N."/>
            <person name="Ehrlich S.D."/>
            <person name="Berka R.M."/>
        </authorList>
    </citation>
    <scope>NUCLEOTIDE SEQUENCE [LARGE SCALE GENOMIC DNA]</scope>
    <source>
        <strain>ATCC 14580 / DSM 13 / JCM 2505 / CCUG 7422 / NBRC 12200 / NCIMB 9375 / NCTC 10341 / NRRL NRS-1264 / Gibson 46</strain>
    </source>
</reference>
<evidence type="ECO:0000255" key="1">
    <source>
        <dbReference type="HAMAP-Rule" id="MF_01033"/>
    </source>
</evidence>
<evidence type="ECO:0000305" key="2"/>
<keyword id="KW-0028">Amino-acid biosynthesis</keyword>
<keyword id="KW-0100">Branched-chain amino acid biosynthesis</keyword>
<keyword id="KW-0963">Cytoplasm</keyword>
<keyword id="KW-0432">Leucine biosynthesis</keyword>
<keyword id="KW-0460">Magnesium</keyword>
<keyword id="KW-0464">Manganese</keyword>
<keyword id="KW-0479">Metal-binding</keyword>
<keyword id="KW-0520">NAD</keyword>
<keyword id="KW-0560">Oxidoreductase</keyword>
<keyword id="KW-1185">Reference proteome</keyword>
<protein>
    <recommendedName>
        <fullName evidence="1">3-isopropylmalate dehydrogenase</fullName>
        <ecNumber evidence="1">1.1.1.85</ecNumber>
    </recommendedName>
    <alternativeName>
        <fullName evidence="1">3-IPM-DH</fullName>
    </alternativeName>
    <alternativeName>
        <fullName evidence="1">Beta-IPM dehydrogenase</fullName>
        <shortName evidence="1">IMDH</shortName>
    </alternativeName>
</protein>
<comment type="function">
    <text evidence="1">Catalyzes the oxidation of 3-carboxy-2-hydroxy-4-methylpentanoate (3-isopropylmalate) to 3-carboxy-4-methyl-2-oxopentanoate. The product decarboxylates to 4-methyl-2 oxopentanoate.</text>
</comment>
<comment type="catalytic activity">
    <reaction evidence="1">
        <text>(2R,3S)-3-isopropylmalate + NAD(+) = 4-methyl-2-oxopentanoate + CO2 + NADH</text>
        <dbReference type="Rhea" id="RHEA:32271"/>
        <dbReference type="ChEBI" id="CHEBI:16526"/>
        <dbReference type="ChEBI" id="CHEBI:17865"/>
        <dbReference type="ChEBI" id="CHEBI:35121"/>
        <dbReference type="ChEBI" id="CHEBI:57540"/>
        <dbReference type="ChEBI" id="CHEBI:57945"/>
        <dbReference type="EC" id="1.1.1.85"/>
    </reaction>
</comment>
<comment type="cofactor">
    <cofactor evidence="1">
        <name>Mg(2+)</name>
        <dbReference type="ChEBI" id="CHEBI:18420"/>
    </cofactor>
    <cofactor evidence="1">
        <name>Mn(2+)</name>
        <dbReference type="ChEBI" id="CHEBI:29035"/>
    </cofactor>
    <text evidence="1">Binds 1 Mg(2+) or Mn(2+) ion per subunit.</text>
</comment>
<comment type="pathway">
    <text evidence="1">Amino-acid biosynthesis; L-leucine biosynthesis; L-leucine from 3-methyl-2-oxobutanoate: step 3/4.</text>
</comment>
<comment type="subunit">
    <text evidence="1">Homodimer.</text>
</comment>
<comment type="subcellular location">
    <subcellularLocation>
        <location evidence="1">Cytoplasm</location>
    </subcellularLocation>
</comment>
<comment type="similarity">
    <text evidence="1">Belongs to the isocitrate and isopropylmalate dehydrogenases family. LeuB type 1 subfamily.</text>
</comment>
<comment type="sequence caution" evidence="2">
    <conflict type="erroneous initiation">
        <sequence resource="EMBL-CDS" id="AAU41825"/>
    </conflict>
</comment>
<sequence length="370" mass="39850">MKKRIALLPGDGIGPEVLDAAVDVLKSVAEHYQHEFEFEYGLIGGAAIDEAGAPLPEETVAACKAADAILLGAVGGPKWDQNPSELRPEKGLLAIRKQLDLFANLRPVKVFESLAGASPLKTEYIEGVDFVIVRELTGGLYFGKPSEQYVNQNGEEEAVDTLFYKKSEMERVIREAFQMAQSRKGKVTSVDKANVLESSKLWRKTAEEVAKEFPDVKLEHMLVDNAAMQLIYAPGQFDIIVTENMFGDILSDEASMLTGSLGMLPSASLSSSGLHLYEPVHGSAPDIAGQNIANPLAAILSAAMMLRTSFGLEAEAQAVEHAVDQVLRAGKRTKDLAKGSEHCTTQSITGEVKAALADDNAISNIMTAYV</sequence>
<gene>
    <name evidence="1" type="primary">leuB</name>
    <name type="ordered locus">BLi02957</name>
    <name type="ordered locus">BL00612</name>
</gene>